<name>TS1R2_GORGO</name>
<keyword id="KW-1003">Cell membrane</keyword>
<keyword id="KW-0297">G-protein coupled receptor</keyword>
<keyword id="KW-0325">Glycoprotein</keyword>
<keyword id="KW-0472">Membrane</keyword>
<keyword id="KW-0675">Receptor</keyword>
<keyword id="KW-1185">Reference proteome</keyword>
<keyword id="KW-0716">Sensory transduction</keyword>
<keyword id="KW-0732">Signal</keyword>
<keyword id="KW-0919">Taste</keyword>
<keyword id="KW-0807">Transducer</keyword>
<keyword id="KW-0812">Transmembrane</keyword>
<keyword id="KW-1133">Transmembrane helix</keyword>
<reference key="1">
    <citation type="submission" date="2006-02" db="EMBL/GenBank/DDBJ databases">
        <title>Sweet receptor gene variation and aspartame blindness in both primates and non-primates.</title>
        <authorList>
            <person name="Li X."/>
            <person name="Wong E.W."/>
            <person name="Li W."/>
            <person name="Lim R."/>
            <person name="Mascioli K.J."/>
            <person name="Maehashi K."/>
            <person name="Bachmanov A.A."/>
            <person name="Tordoff M.G."/>
            <person name="Beauchamp G.K."/>
            <person name="Reed D.R."/>
        </authorList>
    </citation>
    <scope>NUCLEOTIDE SEQUENCE [GENOMIC DNA]</scope>
</reference>
<organism>
    <name type="scientific">Gorilla gorilla gorilla</name>
    <name type="common">Western lowland gorilla</name>
    <dbReference type="NCBI Taxonomy" id="9595"/>
    <lineage>
        <taxon>Eukaryota</taxon>
        <taxon>Metazoa</taxon>
        <taxon>Chordata</taxon>
        <taxon>Craniata</taxon>
        <taxon>Vertebrata</taxon>
        <taxon>Euteleostomi</taxon>
        <taxon>Mammalia</taxon>
        <taxon>Eutheria</taxon>
        <taxon>Euarchontoglires</taxon>
        <taxon>Primates</taxon>
        <taxon>Haplorrhini</taxon>
        <taxon>Catarrhini</taxon>
        <taxon>Hominidae</taxon>
        <taxon>Gorilla</taxon>
    </lineage>
</organism>
<comment type="function">
    <text evidence="1">Putative taste receptor. TAS1R2/TAS1R3 recognizes diverse natural and synthetic sweeteners (By similarity).</text>
</comment>
<comment type="subunit">
    <text evidence="1">Forms heterodimers with TAS1R3.</text>
</comment>
<comment type="subcellular location">
    <subcellularLocation>
        <location evidence="1">Cell membrane</location>
        <topology evidence="1">Multi-pass membrane protein</topology>
    </subcellularLocation>
</comment>
<comment type="similarity">
    <text evidence="3">Belongs to the G-protein coupled receptor 3 family. TAS1R subfamily.</text>
</comment>
<sequence length="839" mass="95119">MGTRATTICSLFFLLWVLAEPAENSDFYLPGDYLLGGLFSLHANMKGIVHLNFLQVPMCKEYEVKVIGYNLMQAMRFAVEEINNDSSLLPGVLLGYEIVDVCYISNNVQPVLYFLAHEDNLLPIQEDYSNYISRVVAVIGPDNSESVMTVANFLSLFLLPQITYSAISDELQDKVRFPALLRTTPSADHHVEAMVQLMLHFRWNWIIVLVSSDTYGRDNGQLLGERLARRDICIAFQETLPTLQPNQNMTSEERQRLVTIVDKLQQSTARVVVVFSPDLSLYDFFNEVLRQNFTGAVWIASESWAIDPVLHNLTELRHLGTFLGITIQSVPIPGFSEFREWSPQAGPPPLSRTSQSYTCNQECDNCLNATLSFNTILRLSGERVVYSVYSAVYAVAHALHSLLGCDNSTCTKRVVYPWQLLEEIWKVNFTLLDHQIFFDPQGDVALHLEIVQWQWDRSQNPFQSVASYYPLQRQLKHIQDISWHTINNTIPVSMCSKRCQSGQKKKPVGIHVCCFECIDCLPGTFLNHTEDEYECQACPNNEWSYQSETSCFKRQLVFLEWHEAPTIAVALLAALGFLSTLAILVIFWRHFQTPIVRSAGGPMCFLMLTLLLVAYMVVPVYVGPPKVSTCLCRQALFPLCFTICISCIAVRSFQIVCAFKMASRFPRAYSYWVRYQGPYVSMAFITVLKMVIVVIGMLATGLSPTTRTDPDDPKITIVSCNPNYRNSLLFNTSLDLLLSVVGFSFAYMGKELPTNYNEAKFITLSMTFYFTSSVSLCTFMSAYSGVLVTIVDLLVTVLNLLAISLGYFGPKCYMILFYPERNTPAYFNSMIQGYTMRRD</sequence>
<gene>
    <name type="primary">TAS1R2</name>
</gene>
<dbReference type="EMBL" id="DQ386296">
    <property type="protein sequence ID" value="ABD37676.1"/>
    <property type="molecule type" value="Genomic_DNA"/>
</dbReference>
<dbReference type="SMR" id="A3QNZ9"/>
<dbReference type="FunCoup" id="A3QNZ9">
    <property type="interactions" value="134"/>
</dbReference>
<dbReference type="STRING" id="9593.ENSGGOP00000005417"/>
<dbReference type="GlyCosmos" id="A3QNZ9">
    <property type="glycosylation" value="9 sites, No reported glycans"/>
</dbReference>
<dbReference type="eggNOG" id="KOG1056">
    <property type="taxonomic scope" value="Eukaryota"/>
</dbReference>
<dbReference type="InParanoid" id="A3QNZ9"/>
<dbReference type="Proteomes" id="UP000001519">
    <property type="component" value="Unplaced"/>
</dbReference>
<dbReference type="GO" id="GO:0005886">
    <property type="term" value="C:plasma membrane"/>
    <property type="evidence" value="ECO:0007669"/>
    <property type="project" value="UniProtKB-SubCell"/>
</dbReference>
<dbReference type="GO" id="GO:0003842">
    <property type="term" value="F:1-pyrroline-5-carboxylate dehydrogenase activity"/>
    <property type="evidence" value="ECO:0000318"/>
    <property type="project" value="GO_Central"/>
</dbReference>
<dbReference type="GO" id="GO:0004930">
    <property type="term" value="F:G protein-coupled receptor activity"/>
    <property type="evidence" value="ECO:0007669"/>
    <property type="project" value="UniProtKB-KW"/>
</dbReference>
<dbReference type="GO" id="GO:0050909">
    <property type="term" value="P:sensory perception of taste"/>
    <property type="evidence" value="ECO:0007669"/>
    <property type="project" value="UniProtKB-KW"/>
</dbReference>
<dbReference type="CDD" id="cd15288">
    <property type="entry name" value="7tmC_TAS1R2"/>
    <property type="match status" value="1"/>
</dbReference>
<dbReference type="CDD" id="cd06363">
    <property type="entry name" value="PBP1_taste_receptor"/>
    <property type="match status" value="1"/>
</dbReference>
<dbReference type="FunFam" id="3.40.50.2300:FF:000016">
    <property type="entry name" value="Taste 1 receptor member 2"/>
    <property type="match status" value="1"/>
</dbReference>
<dbReference type="FunFam" id="2.10.50.30:FF:000004">
    <property type="entry name" value="Taste receptor type 1 member 3-like protein"/>
    <property type="match status" value="1"/>
</dbReference>
<dbReference type="Gene3D" id="3.40.50.2300">
    <property type="match status" value="2"/>
</dbReference>
<dbReference type="Gene3D" id="2.10.50.30">
    <property type="entry name" value="GPCR, family 3, nine cysteines domain"/>
    <property type="match status" value="1"/>
</dbReference>
<dbReference type="InterPro" id="IPR001828">
    <property type="entry name" value="ANF_lig-bd_rcpt"/>
</dbReference>
<dbReference type="InterPro" id="IPR000337">
    <property type="entry name" value="GPCR_3"/>
</dbReference>
<dbReference type="InterPro" id="IPR011500">
    <property type="entry name" value="GPCR_3_9-Cys_dom"/>
</dbReference>
<dbReference type="InterPro" id="IPR038550">
    <property type="entry name" value="GPCR_3_9-Cys_sf"/>
</dbReference>
<dbReference type="InterPro" id="IPR017978">
    <property type="entry name" value="GPCR_3_C"/>
</dbReference>
<dbReference type="InterPro" id="IPR000068">
    <property type="entry name" value="GPCR_3_Ca_sens_rcpt-rel"/>
</dbReference>
<dbReference type="InterPro" id="IPR017979">
    <property type="entry name" value="GPCR_3_CS"/>
</dbReference>
<dbReference type="InterPro" id="IPR028082">
    <property type="entry name" value="Peripla_BP_I"/>
</dbReference>
<dbReference type="PANTHER" id="PTHR24061">
    <property type="entry name" value="CALCIUM-SENSING RECEPTOR-RELATED"/>
    <property type="match status" value="1"/>
</dbReference>
<dbReference type="PANTHER" id="PTHR24061:SF517">
    <property type="entry name" value="TASTE RECEPTOR TYPE 1 MEMBER 2"/>
    <property type="match status" value="1"/>
</dbReference>
<dbReference type="Pfam" id="PF00003">
    <property type="entry name" value="7tm_3"/>
    <property type="match status" value="1"/>
</dbReference>
<dbReference type="Pfam" id="PF01094">
    <property type="entry name" value="ANF_receptor"/>
    <property type="match status" value="1"/>
</dbReference>
<dbReference type="Pfam" id="PF07562">
    <property type="entry name" value="NCD3G"/>
    <property type="match status" value="1"/>
</dbReference>
<dbReference type="PRINTS" id="PR00248">
    <property type="entry name" value="GPCRMGR"/>
</dbReference>
<dbReference type="SUPFAM" id="SSF53822">
    <property type="entry name" value="Periplasmic binding protein-like I"/>
    <property type="match status" value="1"/>
</dbReference>
<dbReference type="PROSITE" id="PS00980">
    <property type="entry name" value="G_PROTEIN_RECEP_F3_2"/>
    <property type="match status" value="1"/>
</dbReference>
<dbReference type="PROSITE" id="PS50259">
    <property type="entry name" value="G_PROTEIN_RECEP_F3_4"/>
    <property type="match status" value="1"/>
</dbReference>
<feature type="signal peptide" evidence="2">
    <location>
        <begin position="1"/>
        <end position="19"/>
    </location>
</feature>
<feature type="chain" id="PRO_0000285551" description="Taste receptor type 1 member 2">
    <location>
        <begin position="20"/>
        <end position="839"/>
    </location>
</feature>
<feature type="topological domain" description="Extracellular" evidence="2">
    <location>
        <begin position="20"/>
        <end position="566"/>
    </location>
</feature>
<feature type="transmembrane region" description="Helical; Name=1" evidence="2">
    <location>
        <begin position="567"/>
        <end position="587"/>
    </location>
</feature>
<feature type="topological domain" description="Cytoplasmic" evidence="2">
    <location>
        <begin position="588"/>
        <end position="602"/>
    </location>
</feature>
<feature type="transmembrane region" description="Helical; Name=2" evidence="2">
    <location>
        <begin position="603"/>
        <end position="623"/>
    </location>
</feature>
<feature type="topological domain" description="Extracellular" evidence="2">
    <location>
        <begin position="624"/>
        <end position="635"/>
    </location>
</feature>
<feature type="transmembrane region" description="Helical; Name=3" evidence="2">
    <location>
        <begin position="636"/>
        <end position="656"/>
    </location>
</feature>
<feature type="topological domain" description="Cytoplasmic" evidence="2">
    <location>
        <begin position="657"/>
        <end position="681"/>
    </location>
</feature>
<feature type="transmembrane region" description="Helical; Name=4" evidence="2">
    <location>
        <begin position="682"/>
        <end position="702"/>
    </location>
</feature>
<feature type="topological domain" description="Extracellular" evidence="2">
    <location>
        <begin position="703"/>
        <end position="727"/>
    </location>
</feature>
<feature type="transmembrane region" description="Helical; Name=5" evidence="2">
    <location>
        <begin position="728"/>
        <end position="748"/>
    </location>
</feature>
<feature type="topological domain" description="Cytoplasmic" evidence="2">
    <location>
        <begin position="749"/>
        <end position="760"/>
    </location>
</feature>
<feature type="transmembrane region" description="Helical; Name=6" evidence="2">
    <location>
        <begin position="761"/>
        <end position="781"/>
    </location>
</feature>
<feature type="topological domain" description="Extracellular" evidence="2">
    <location>
        <begin position="782"/>
        <end position="784"/>
    </location>
</feature>
<feature type="transmembrane region" description="Helical; Name=7" evidence="2">
    <location>
        <begin position="785"/>
        <end position="805"/>
    </location>
</feature>
<feature type="topological domain" description="Cytoplasmic" evidence="2">
    <location>
        <begin position="806"/>
        <end position="839"/>
    </location>
</feature>
<feature type="glycosylation site" description="N-linked (GlcNAc...) asparagine" evidence="2">
    <location>
        <position position="84"/>
    </location>
</feature>
<feature type="glycosylation site" description="N-linked (GlcNAc...) asparagine" evidence="2">
    <location>
        <position position="248"/>
    </location>
</feature>
<feature type="glycosylation site" description="N-linked (GlcNAc...) asparagine" evidence="2">
    <location>
        <position position="292"/>
    </location>
</feature>
<feature type="glycosylation site" description="N-linked (GlcNAc...) asparagine" evidence="2">
    <location>
        <position position="312"/>
    </location>
</feature>
<feature type="glycosylation site" description="N-linked (GlcNAc...) asparagine" evidence="2">
    <location>
        <position position="368"/>
    </location>
</feature>
<feature type="glycosylation site" description="N-linked (GlcNAc...) asparagine" evidence="2">
    <location>
        <position position="407"/>
    </location>
</feature>
<feature type="glycosylation site" description="N-linked (GlcNAc...) asparagine" evidence="2">
    <location>
        <position position="428"/>
    </location>
</feature>
<feature type="glycosylation site" description="N-linked (GlcNAc...) asparagine" evidence="2">
    <location>
        <position position="487"/>
    </location>
</feature>
<feature type="glycosylation site" description="N-linked (GlcNAc...) asparagine" evidence="2">
    <location>
        <position position="527"/>
    </location>
</feature>
<protein>
    <recommendedName>
        <fullName>Taste receptor type 1 member 2</fullName>
    </recommendedName>
    <alternativeName>
        <fullName>Sweet taste receptor T1R2</fullName>
    </alternativeName>
</protein>
<proteinExistence type="inferred from homology"/>
<accession>A3QNZ9</accession>
<evidence type="ECO:0000250" key="1"/>
<evidence type="ECO:0000255" key="2"/>
<evidence type="ECO:0000305" key="3"/>